<dbReference type="EC" id="4.2.1.33" evidence="1"/>
<dbReference type="EMBL" id="AE009441">
    <property type="protein sequence ID" value="AAL63861.1"/>
    <property type="molecule type" value="Genomic_DNA"/>
</dbReference>
<dbReference type="RefSeq" id="WP_011008332.1">
    <property type="nucleotide sequence ID" value="NC_003364.1"/>
</dbReference>
<dbReference type="SMR" id="Q8ZW41"/>
<dbReference type="FunCoup" id="Q8ZW41">
    <property type="interactions" value="180"/>
</dbReference>
<dbReference type="STRING" id="178306.PAE1984"/>
<dbReference type="EnsemblBacteria" id="AAL63861">
    <property type="protein sequence ID" value="AAL63861"/>
    <property type="gene ID" value="PAE1984"/>
</dbReference>
<dbReference type="GeneID" id="1464184"/>
<dbReference type="KEGG" id="pai:PAE1984"/>
<dbReference type="PATRIC" id="fig|178306.9.peg.1465"/>
<dbReference type="eggNOG" id="arCOG01698">
    <property type="taxonomic scope" value="Archaea"/>
</dbReference>
<dbReference type="HOGENOM" id="CLU_006714_3_4_2"/>
<dbReference type="InParanoid" id="Q8ZW41"/>
<dbReference type="UniPathway" id="UPA00048">
    <property type="reaction ID" value="UER00071"/>
</dbReference>
<dbReference type="Proteomes" id="UP000002439">
    <property type="component" value="Chromosome"/>
</dbReference>
<dbReference type="GO" id="GO:0003861">
    <property type="term" value="F:3-isopropylmalate dehydratase activity"/>
    <property type="evidence" value="ECO:0007669"/>
    <property type="project" value="UniProtKB-UniRule"/>
</dbReference>
<dbReference type="GO" id="GO:0051539">
    <property type="term" value="F:4 iron, 4 sulfur cluster binding"/>
    <property type="evidence" value="ECO:0007669"/>
    <property type="project" value="UniProtKB-KW"/>
</dbReference>
<dbReference type="GO" id="GO:0046872">
    <property type="term" value="F:metal ion binding"/>
    <property type="evidence" value="ECO:0007669"/>
    <property type="project" value="UniProtKB-KW"/>
</dbReference>
<dbReference type="GO" id="GO:0009098">
    <property type="term" value="P:L-leucine biosynthetic process"/>
    <property type="evidence" value="ECO:0007669"/>
    <property type="project" value="UniProtKB-UniRule"/>
</dbReference>
<dbReference type="Gene3D" id="3.30.499.10">
    <property type="entry name" value="Aconitase, domain 3"/>
    <property type="match status" value="2"/>
</dbReference>
<dbReference type="HAMAP" id="MF_01027">
    <property type="entry name" value="LeuC_type2"/>
    <property type="match status" value="1"/>
</dbReference>
<dbReference type="InterPro" id="IPR015931">
    <property type="entry name" value="Acnase/IPM_dHydase_lsu_aba_1/3"/>
</dbReference>
<dbReference type="InterPro" id="IPR001030">
    <property type="entry name" value="Acoase/IPM_deHydtase_lsu_aba"/>
</dbReference>
<dbReference type="InterPro" id="IPR018136">
    <property type="entry name" value="Aconitase_4Fe-4S_BS"/>
</dbReference>
<dbReference type="InterPro" id="IPR036008">
    <property type="entry name" value="Aconitase_4Fe-4S_dom"/>
</dbReference>
<dbReference type="InterPro" id="IPR011826">
    <property type="entry name" value="HAcnase/IPMdehydase_lsu_prok"/>
</dbReference>
<dbReference type="InterPro" id="IPR006251">
    <property type="entry name" value="Homoacnase/IPMdehydase_lsu"/>
</dbReference>
<dbReference type="InterPro" id="IPR050067">
    <property type="entry name" value="IPM_dehydratase_rel_enz"/>
</dbReference>
<dbReference type="NCBIfam" id="TIGR01343">
    <property type="entry name" value="hacA_fam"/>
    <property type="match status" value="1"/>
</dbReference>
<dbReference type="NCBIfam" id="TIGR02086">
    <property type="entry name" value="IPMI_arch"/>
    <property type="match status" value="1"/>
</dbReference>
<dbReference type="NCBIfam" id="NF001614">
    <property type="entry name" value="PRK00402.1"/>
    <property type="match status" value="1"/>
</dbReference>
<dbReference type="PANTHER" id="PTHR43822:SF2">
    <property type="entry name" value="HOMOACONITASE, MITOCHONDRIAL"/>
    <property type="match status" value="1"/>
</dbReference>
<dbReference type="PANTHER" id="PTHR43822">
    <property type="entry name" value="HOMOACONITASE, MITOCHONDRIAL-RELATED"/>
    <property type="match status" value="1"/>
</dbReference>
<dbReference type="Pfam" id="PF00330">
    <property type="entry name" value="Aconitase"/>
    <property type="match status" value="2"/>
</dbReference>
<dbReference type="PRINTS" id="PR00415">
    <property type="entry name" value="ACONITASE"/>
</dbReference>
<dbReference type="SUPFAM" id="SSF53732">
    <property type="entry name" value="Aconitase iron-sulfur domain"/>
    <property type="match status" value="1"/>
</dbReference>
<dbReference type="PROSITE" id="PS00450">
    <property type="entry name" value="ACONITASE_1"/>
    <property type="match status" value="1"/>
</dbReference>
<dbReference type="PROSITE" id="PS01244">
    <property type="entry name" value="ACONITASE_2"/>
    <property type="match status" value="1"/>
</dbReference>
<sequence length="415" mass="44748">MPTWTEYILYKKLGKTPSPGDVVEIVPDLVGFHDLTGYHVLEVLESMGKVEVFDRERVVVAFDHLSPPPNQRAAEIMVYIRRHVKALGLPNFYDVGGGILHQIILEKYALPGQVIFAADSHTNTAGAVGAFAHGMGATDIAAALKLGKTWIVVPAPFRIDVVGEFPIGVMGKDVALHLLGQFGAEGFNGYSVEVFVETPKAFPMDDRATVANMSTEMGADALMFIPDVITAEYLKTERGVDYTPPRIEPGNYADKYTVELPRLEPLVAAPYSVDNIKSVREVEGVEVDQVFIGSCTNGRLSDIAVAAKILKGRRVKSRCIAIPASYEVFRRAMKLGYIDVLTEAGCVVTYGTCGPCLGGHFGVAGPGEVVVTTSNRNFRGRVGHPDAKIYLANPAVAAATAAEGKIADPRPYLRG</sequence>
<comment type="function">
    <text evidence="1">Catalyzes the isomerization between 2-isopropylmalate and 3-isopropylmalate, via the formation of 2-isopropylmaleate.</text>
</comment>
<comment type="catalytic activity">
    <reaction evidence="1">
        <text>(2R,3S)-3-isopropylmalate = (2S)-2-isopropylmalate</text>
        <dbReference type="Rhea" id="RHEA:32287"/>
        <dbReference type="ChEBI" id="CHEBI:1178"/>
        <dbReference type="ChEBI" id="CHEBI:35121"/>
        <dbReference type="EC" id="4.2.1.33"/>
    </reaction>
</comment>
<comment type="cofactor">
    <cofactor evidence="1">
        <name>[4Fe-4S] cluster</name>
        <dbReference type="ChEBI" id="CHEBI:49883"/>
    </cofactor>
    <text evidence="1">Binds 1 [4Fe-4S] cluster per subunit.</text>
</comment>
<comment type="pathway">
    <text evidence="1">Amino-acid biosynthesis; L-leucine biosynthesis; L-leucine from 3-methyl-2-oxobutanoate: step 2/4.</text>
</comment>
<comment type="subunit">
    <text evidence="1">Heterodimer of LeuC and LeuD.</text>
</comment>
<comment type="similarity">
    <text evidence="1">Belongs to the aconitase/IPM isomerase family. LeuC type 2 subfamily.</text>
</comment>
<protein>
    <recommendedName>
        <fullName evidence="1">3-isopropylmalate dehydratase large subunit</fullName>
        <ecNumber evidence="1">4.2.1.33</ecNumber>
    </recommendedName>
    <alternativeName>
        <fullName evidence="1">Alpha-IPM isomerase</fullName>
        <shortName evidence="1">IPMI</shortName>
    </alternativeName>
    <alternativeName>
        <fullName evidence="1">Isopropylmalate isomerase</fullName>
    </alternativeName>
</protein>
<feature type="chain" id="PRO_0000076879" description="3-isopropylmalate dehydratase large subunit">
    <location>
        <begin position="1"/>
        <end position="415"/>
    </location>
</feature>
<feature type="binding site" evidence="1">
    <location>
        <position position="295"/>
    </location>
    <ligand>
        <name>[4Fe-4S] cluster</name>
        <dbReference type="ChEBI" id="CHEBI:49883"/>
    </ligand>
</feature>
<feature type="binding site" evidence="1">
    <location>
        <position position="353"/>
    </location>
    <ligand>
        <name>[4Fe-4S] cluster</name>
        <dbReference type="ChEBI" id="CHEBI:49883"/>
    </ligand>
</feature>
<feature type="binding site" evidence="1">
    <location>
        <position position="356"/>
    </location>
    <ligand>
        <name>[4Fe-4S] cluster</name>
        <dbReference type="ChEBI" id="CHEBI:49883"/>
    </ligand>
</feature>
<evidence type="ECO:0000255" key="1">
    <source>
        <dbReference type="HAMAP-Rule" id="MF_01027"/>
    </source>
</evidence>
<name>LEUC_PYRAE</name>
<reference key="1">
    <citation type="journal article" date="2002" name="Proc. Natl. Acad. Sci. U.S.A.">
        <title>Genome sequence of the hyperthermophilic crenarchaeon Pyrobaculum aerophilum.</title>
        <authorList>
            <person name="Fitz-Gibbon S.T."/>
            <person name="Ladner H."/>
            <person name="Kim U.-J."/>
            <person name="Stetter K.O."/>
            <person name="Simon M.I."/>
            <person name="Miller J.H."/>
        </authorList>
    </citation>
    <scope>NUCLEOTIDE SEQUENCE [LARGE SCALE GENOMIC DNA]</scope>
    <source>
        <strain>ATCC 51768 / DSM 7523 / JCM 9630 / CIP 104966 / NBRC 100827 / IM2</strain>
    </source>
</reference>
<gene>
    <name evidence="1" type="primary">leuC</name>
    <name type="ordered locus">PAE1984</name>
</gene>
<keyword id="KW-0004">4Fe-4S</keyword>
<keyword id="KW-0028">Amino-acid biosynthesis</keyword>
<keyword id="KW-0100">Branched-chain amino acid biosynthesis</keyword>
<keyword id="KW-0408">Iron</keyword>
<keyword id="KW-0411">Iron-sulfur</keyword>
<keyword id="KW-0432">Leucine biosynthesis</keyword>
<keyword id="KW-0456">Lyase</keyword>
<keyword id="KW-0479">Metal-binding</keyword>
<keyword id="KW-1185">Reference proteome</keyword>
<organism>
    <name type="scientific">Pyrobaculum aerophilum (strain ATCC 51768 / DSM 7523 / JCM 9630 / CIP 104966 / NBRC 100827 / IM2)</name>
    <dbReference type="NCBI Taxonomy" id="178306"/>
    <lineage>
        <taxon>Archaea</taxon>
        <taxon>Thermoproteota</taxon>
        <taxon>Thermoprotei</taxon>
        <taxon>Thermoproteales</taxon>
        <taxon>Thermoproteaceae</taxon>
        <taxon>Pyrobaculum</taxon>
    </lineage>
</organism>
<accession>Q8ZW41</accession>
<proteinExistence type="inferred from homology"/>